<keyword id="KW-0963">Cytoplasm</keyword>
<keyword id="KW-0489">Methyltransferase</keyword>
<keyword id="KW-0545">Nucleotide biosynthesis</keyword>
<keyword id="KW-1185">Reference proteome</keyword>
<keyword id="KW-0808">Transferase</keyword>
<feature type="chain" id="PRO_0000140999" description="Thymidylate synthase">
    <location>
        <begin position="1"/>
        <end position="283"/>
    </location>
</feature>
<feature type="active site" description="Nucleophile" evidence="1">
    <location>
        <position position="160"/>
    </location>
</feature>
<feature type="binding site" evidence="1">
    <location>
        <position position="22"/>
    </location>
    <ligand>
        <name>dUMP</name>
        <dbReference type="ChEBI" id="CHEBI:246422"/>
    </ligand>
</feature>
<feature type="binding site" evidence="1">
    <location>
        <begin position="180"/>
        <end position="183"/>
    </location>
    <ligand>
        <name>dUMP</name>
        <dbReference type="ChEBI" id="CHEBI:246422"/>
    </ligand>
</feature>
<feature type="binding site" evidence="1">
    <location>
        <position position="183"/>
    </location>
    <ligand>
        <name>(6R)-5,10-methylene-5,6,7,8-tetrahydrofolate</name>
        <dbReference type="ChEBI" id="CHEBI:15636"/>
    </ligand>
</feature>
<feature type="binding site" evidence="1">
    <location>
        <position position="191"/>
    </location>
    <ligand>
        <name>dUMP</name>
        <dbReference type="ChEBI" id="CHEBI:246422"/>
    </ligand>
</feature>
<feature type="binding site" evidence="1">
    <location>
        <begin position="221"/>
        <end position="223"/>
    </location>
    <ligand>
        <name>dUMP</name>
        <dbReference type="ChEBI" id="CHEBI:246422"/>
    </ligand>
</feature>
<feature type="binding site" evidence="1">
    <location>
        <position position="282"/>
    </location>
    <ligand>
        <name>(6R)-5,10-methylene-5,6,7,8-tetrahydrofolate</name>
        <dbReference type="ChEBI" id="CHEBI:15636"/>
    </ligand>
</feature>
<feature type="sequence conflict" description="In Ref. 1; AAL54880." evidence="2" ref="1">
    <original>A</original>
    <variation>E</variation>
    <location>
        <position position="21"/>
    </location>
</feature>
<feature type="sequence conflict" description="In Ref. 1; AAL54880." evidence="2" ref="1">
    <original>D</original>
    <variation>E</variation>
    <location>
        <position position="238"/>
    </location>
</feature>
<organism>
    <name type="scientific">Pasteurella multocida (strain Pm70)</name>
    <dbReference type="NCBI Taxonomy" id="272843"/>
    <lineage>
        <taxon>Bacteria</taxon>
        <taxon>Pseudomonadati</taxon>
        <taxon>Pseudomonadota</taxon>
        <taxon>Gammaproteobacteria</taxon>
        <taxon>Pasteurellales</taxon>
        <taxon>Pasteurellaceae</taxon>
        <taxon>Pasteurella</taxon>
    </lineage>
</organism>
<gene>
    <name evidence="1" type="primary">thyA</name>
    <name type="ordered locus">PM0079</name>
</gene>
<proteinExistence type="inferred from homology"/>
<reference key="1">
    <citation type="submission" date="1998-05" db="EMBL/GenBank/DDBJ databases">
        <authorList>
            <person name="Moreno J.A."/>
            <person name="Bosch M."/>
            <person name="Badiola I."/>
            <person name="Llagostera M."/>
            <person name="Barbe J."/>
        </authorList>
    </citation>
    <scope>NUCLEOTIDE SEQUENCE [GENOMIC DNA]</scope>
    <source>
        <strain>Pm25</strain>
    </source>
</reference>
<reference key="2">
    <citation type="journal article" date="2001" name="Proc. Natl. Acad. Sci. U.S.A.">
        <title>Complete genomic sequence of Pasteurella multocida Pm70.</title>
        <authorList>
            <person name="May B.J."/>
            <person name="Zhang Q."/>
            <person name="Li L.L."/>
            <person name="Paustian M.L."/>
            <person name="Whittam T.S."/>
            <person name="Kapur V."/>
        </authorList>
    </citation>
    <scope>NUCLEOTIDE SEQUENCE [LARGE SCALE GENOMIC DNA]</scope>
    <source>
        <strain>Pm70</strain>
    </source>
</reference>
<dbReference type="EC" id="2.1.1.45" evidence="1"/>
<dbReference type="EMBL" id="AE004439">
    <property type="protein sequence ID" value="AAK02163.1"/>
    <property type="molecule type" value="Genomic_DNA"/>
</dbReference>
<dbReference type="EMBL" id="AF064791">
    <property type="protein sequence ID" value="AAL54880.1"/>
    <property type="molecule type" value="Genomic_DNA"/>
</dbReference>
<dbReference type="RefSeq" id="WP_010906470.1">
    <property type="nucleotide sequence ID" value="NC_002663.1"/>
</dbReference>
<dbReference type="SMR" id="P57808"/>
<dbReference type="STRING" id="272843.PM0079"/>
<dbReference type="EnsemblBacteria" id="AAK02163">
    <property type="protein sequence ID" value="AAK02163"/>
    <property type="gene ID" value="PM0079"/>
</dbReference>
<dbReference type="KEGG" id="pmu:PM0079"/>
<dbReference type="PATRIC" id="fig|272843.6.peg.81"/>
<dbReference type="HOGENOM" id="CLU_021669_0_1_6"/>
<dbReference type="OrthoDB" id="9774633at2"/>
<dbReference type="UniPathway" id="UPA00575"/>
<dbReference type="Proteomes" id="UP000000809">
    <property type="component" value="Chromosome"/>
</dbReference>
<dbReference type="GO" id="GO:0005829">
    <property type="term" value="C:cytosol"/>
    <property type="evidence" value="ECO:0007669"/>
    <property type="project" value="TreeGrafter"/>
</dbReference>
<dbReference type="GO" id="GO:0004799">
    <property type="term" value="F:thymidylate synthase activity"/>
    <property type="evidence" value="ECO:0007669"/>
    <property type="project" value="UniProtKB-UniRule"/>
</dbReference>
<dbReference type="GO" id="GO:0006231">
    <property type="term" value="P:dTMP biosynthetic process"/>
    <property type="evidence" value="ECO:0007669"/>
    <property type="project" value="UniProtKB-UniRule"/>
</dbReference>
<dbReference type="GO" id="GO:0006235">
    <property type="term" value="P:dTTP biosynthetic process"/>
    <property type="evidence" value="ECO:0007669"/>
    <property type="project" value="UniProtKB-UniRule"/>
</dbReference>
<dbReference type="GO" id="GO:0032259">
    <property type="term" value="P:methylation"/>
    <property type="evidence" value="ECO:0007669"/>
    <property type="project" value="UniProtKB-KW"/>
</dbReference>
<dbReference type="CDD" id="cd00351">
    <property type="entry name" value="TS_Pyrimidine_HMase"/>
    <property type="match status" value="1"/>
</dbReference>
<dbReference type="Gene3D" id="3.30.572.10">
    <property type="entry name" value="Thymidylate synthase/dCMP hydroxymethylase domain"/>
    <property type="match status" value="1"/>
</dbReference>
<dbReference type="HAMAP" id="MF_00008">
    <property type="entry name" value="Thymidy_synth_bact"/>
    <property type="match status" value="1"/>
</dbReference>
<dbReference type="InterPro" id="IPR045097">
    <property type="entry name" value="Thymidate_synth/dCMP_Mease"/>
</dbReference>
<dbReference type="InterPro" id="IPR023451">
    <property type="entry name" value="Thymidate_synth/dCMP_Mease_dom"/>
</dbReference>
<dbReference type="InterPro" id="IPR036926">
    <property type="entry name" value="Thymidate_synth/dCMP_Mease_sf"/>
</dbReference>
<dbReference type="InterPro" id="IPR000398">
    <property type="entry name" value="Thymidylate_synthase"/>
</dbReference>
<dbReference type="InterPro" id="IPR020940">
    <property type="entry name" value="Thymidylate_synthase_AS"/>
</dbReference>
<dbReference type="NCBIfam" id="NF002498">
    <property type="entry name" value="PRK01827.1-4"/>
    <property type="match status" value="1"/>
</dbReference>
<dbReference type="NCBIfam" id="TIGR03284">
    <property type="entry name" value="thym_sym"/>
    <property type="match status" value="1"/>
</dbReference>
<dbReference type="PANTHER" id="PTHR11548:SF9">
    <property type="entry name" value="THYMIDYLATE SYNTHASE"/>
    <property type="match status" value="1"/>
</dbReference>
<dbReference type="PANTHER" id="PTHR11548">
    <property type="entry name" value="THYMIDYLATE SYNTHASE 1"/>
    <property type="match status" value="1"/>
</dbReference>
<dbReference type="Pfam" id="PF00303">
    <property type="entry name" value="Thymidylat_synt"/>
    <property type="match status" value="1"/>
</dbReference>
<dbReference type="PRINTS" id="PR00108">
    <property type="entry name" value="THYMDSNTHASE"/>
</dbReference>
<dbReference type="SUPFAM" id="SSF55831">
    <property type="entry name" value="Thymidylate synthase/dCMP hydroxymethylase"/>
    <property type="match status" value="1"/>
</dbReference>
<dbReference type="PROSITE" id="PS00091">
    <property type="entry name" value="THYMIDYLATE_SYNTHASE"/>
    <property type="match status" value="1"/>
</dbReference>
<evidence type="ECO:0000255" key="1">
    <source>
        <dbReference type="HAMAP-Rule" id="MF_00008"/>
    </source>
</evidence>
<evidence type="ECO:0000305" key="2"/>
<accession>P57808</accession>
<accession>Q8VUE1</accession>
<comment type="function">
    <text evidence="1">Catalyzes the reductive methylation of 2'-deoxyuridine-5'-monophosphate (dUMP) to 2'-deoxythymidine-5'-monophosphate (dTMP) while utilizing 5,10-methylenetetrahydrofolate (mTHF) as the methyl donor and reductant in the reaction, yielding dihydrofolate (DHF) as a by-product. This enzymatic reaction provides an intracellular de novo source of dTMP, an essential precursor for DNA biosynthesis.</text>
</comment>
<comment type="catalytic activity">
    <reaction evidence="1">
        <text>dUMP + (6R)-5,10-methylene-5,6,7,8-tetrahydrofolate = 7,8-dihydrofolate + dTMP</text>
        <dbReference type="Rhea" id="RHEA:12104"/>
        <dbReference type="ChEBI" id="CHEBI:15636"/>
        <dbReference type="ChEBI" id="CHEBI:57451"/>
        <dbReference type="ChEBI" id="CHEBI:63528"/>
        <dbReference type="ChEBI" id="CHEBI:246422"/>
        <dbReference type="EC" id="2.1.1.45"/>
    </reaction>
</comment>
<comment type="pathway">
    <text evidence="1">Pyrimidine metabolism; dTTP biosynthesis.</text>
</comment>
<comment type="subunit">
    <text evidence="1">Homodimer.</text>
</comment>
<comment type="subcellular location">
    <subcellularLocation>
        <location evidence="1">Cytoplasm</location>
    </subcellularLocation>
</comment>
<comment type="similarity">
    <text evidence="1">Belongs to the thymidylate synthase family. Bacterial-type ThyA subfamily.</text>
</comment>
<protein>
    <recommendedName>
        <fullName evidence="1">Thymidylate synthase</fullName>
        <shortName evidence="1">TS</shortName>
        <shortName evidence="1">TSase</shortName>
        <ecNumber evidence="1">2.1.1.45</ecNumber>
    </recommendedName>
</protein>
<name>TYSY_PASMU</name>
<sequence>MKHYLELCQRIVDEGVWVENARTGKRCLTVIDADLTYDVANNQFPLITTRKSYWKAAIAEFLGYIRGYDNAADFRKLGTKTWDANANENSAWLNNPHRKGTDDMGRVYGVQGRAWRKPNGETVDQLRKIVNNLRNGIDDRGEIMTFFNPGEFELGCLRPCMHTHTFSLLGDTLYLTSYQRSCDVPLGLNFNQIQVFTFLALMAQITGKKAGKAYHKIINAHIYEDQLDLMKNVQLKRDPFPLPQLHINPEIKTLEDLETWVTMDDFKVTGYQCHDAIKYPFSV</sequence>